<evidence type="ECO:0000255" key="1">
    <source>
        <dbReference type="HAMAP-Rule" id="MF_00382"/>
    </source>
</evidence>
<evidence type="ECO:0000305" key="2"/>
<keyword id="KW-0150">Chloroplast</keyword>
<keyword id="KW-0934">Plastid</keyword>
<keyword id="KW-0687">Ribonucleoprotein</keyword>
<keyword id="KW-0689">Ribosomal protein</keyword>
<keyword id="KW-0694">RNA-binding</keyword>
<keyword id="KW-0699">rRNA-binding</keyword>
<gene>
    <name evidence="1" type="primary">rpl20</name>
</gene>
<name>RK20_CALFG</name>
<dbReference type="EMBL" id="AJ428413">
    <property type="protein sequence ID" value="CAD28744.1"/>
    <property type="molecule type" value="Genomic_DNA"/>
</dbReference>
<dbReference type="RefSeq" id="NP_862777.1">
    <property type="nucleotide sequence ID" value="NC_004993.1"/>
</dbReference>
<dbReference type="SMR" id="Q7YJV3"/>
<dbReference type="GeneID" id="2598024"/>
<dbReference type="GO" id="GO:0009507">
    <property type="term" value="C:chloroplast"/>
    <property type="evidence" value="ECO:0007669"/>
    <property type="project" value="UniProtKB-SubCell"/>
</dbReference>
<dbReference type="GO" id="GO:1990904">
    <property type="term" value="C:ribonucleoprotein complex"/>
    <property type="evidence" value="ECO:0007669"/>
    <property type="project" value="UniProtKB-KW"/>
</dbReference>
<dbReference type="GO" id="GO:0005840">
    <property type="term" value="C:ribosome"/>
    <property type="evidence" value="ECO:0007669"/>
    <property type="project" value="UniProtKB-KW"/>
</dbReference>
<dbReference type="GO" id="GO:0019843">
    <property type="term" value="F:rRNA binding"/>
    <property type="evidence" value="ECO:0007669"/>
    <property type="project" value="UniProtKB-UniRule"/>
</dbReference>
<dbReference type="GO" id="GO:0003735">
    <property type="term" value="F:structural constituent of ribosome"/>
    <property type="evidence" value="ECO:0007669"/>
    <property type="project" value="InterPro"/>
</dbReference>
<dbReference type="GO" id="GO:0000027">
    <property type="term" value="P:ribosomal large subunit assembly"/>
    <property type="evidence" value="ECO:0007669"/>
    <property type="project" value="UniProtKB-UniRule"/>
</dbReference>
<dbReference type="GO" id="GO:0006412">
    <property type="term" value="P:translation"/>
    <property type="evidence" value="ECO:0007669"/>
    <property type="project" value="InterPro"/>
</dbReference>
<dbReference type="CDD" id="cd07026">
    <property type="entry name" value="Ribosomal_L20"/>
    <property type="match status" value="1"/>
</dbReference>
<dbReference type="FunFam" id="1.10.1900.20:FF:000001">
    <property type="entry name" value="50S ribosomal protein L20"/>
    <property type="match status" value="1"/>
</dbReference>
<dbReference type="Gene3D" id="6.10.160.10">
    <property type="match status" value="1"/>
</dbReference>
<dbReference type="Gene3D" id="1.10.1900.20">
    <property type="entry name" value="Ribosomal protein L20"/>
    <property type="match status" value="1"/>
</dbReference>
<dbReference type="HAMAP" id="MF_00382">
    <property type="entry name" value="Ribosomal_bL20"/>
    <property type="match status" value="1"/>
</dbReference>
<dbReference type="InterPro" id="IPR005813">
    <property type="entry name" value="Ribosomal_bL20"/>
</dbReference>
<dbReference type="InterPro" id="IPR049946">
    <property type="entry name" value="RIBOSOMAL_L20_CS"/>
</dbReference>
<dbReference type="InterPro" id="IPR035566">
    <property type="entry name" value="Ribosomal_protein_bL20_C"/>
</dbReference>
<dbReference type="NCBIfam" id="TIGR01032">
    <property type="entry name" value="rplT_bact"/>
    <property type="match status" value="1"/>
</dbReference>
<dbReference type="PANTHER" id="PTHR10986">
    <property type="entry name" value="39S RIBOSOMAL PROTEIN L20"/>
    <property type="match status" value="1"/>
</dbReference>
<dbReference type="Pfam" id="PF00453">
    <property type="entry name" value="Ribosomal_L20"/>
    <property type="match status" value="1"/>
</dbReference>
<dbReference type="PRINTS" id="PR00062">
    <property type="entry name" value="RIBOSOMALL20"/>
</dbReference>
<dbReference type="SUPFAM" id="SSF74731">
    <property type="entry name" value="Ribosomal protein L20"/>
    <property type="match status" value="1"/>
</dbReference>
<dbReference type="PROSITE" id="PS00937">
    <property type="entry name" value="RIBOSOMAL_L20"/>
    <property type="match status" value="1"/>
</dbReference>
<feature type="chain" id="PRO_0000177281" description="Large ribosomal subunit protein bL20c">
    <location>
        <begin position="1"/>
        <end position="117"/>
    </location>
</feature>
<comment type="function">
    <text evidence="1">Binds directly to 23S ribosomal RNA and is necessary for the in vitro assembly process of the 50S ribosomal subunit. It is not involved in the protein synthesizing functions of that subunit.</text>
</comment>
<comment type="subcellular location">
    <subcellularLocation>
        <location>Plastid</location>
        <location>Chloroplast</location>
    </subcellularLocation>
</comment>
<comment type="similarity">
    <text evidence="1">Belongs to the bacterial ribosomal protein bL20 family.</text>
</comment>
<protein>
    <recommendedName>
        <fullName evidence="1">Large ribosomal subunit protein bL20c</fullName>
    </recommendedName>
    <alternativeName>
        <fullName evidence="2">50S ribosomal protein L20, chloroplastic</fullName>
    </alternativeName>
</protein>
<proteinExistence type="inferred from homology"/>
<sequence>MTRIRRGYIARRRRTKIRLFASTFRGAHSRLTRTITQQKMRALVSTQRDRGRRKRDFRRLWITRINAVTRENRVSYSYSRLIHDLYKKRLLLNRKILAQIAISNRNCLDTISNEILK</sequence>
<accession>Q7YJV3</accession>
<geneLocation type="chloroplast"/>
<reference key="1">
    <citation type="journal article" date="2003" name="Plant Syst. Evol.">
        <title>The chloroplast genome of the 'basal' angiosperm Calycanthus fertilis -- structural and phylogenetic analyses.</title>
        <authorList>
            <person name="Goremykin V."/>
            <person name="Hirsch-Ernst K.I."/>
            <person name="Woelfl S."/>
            <person name="Hellwig F.H."/>
        </authorList>
    </citation>
    <scope>NUCLEOTIDE SEQUENCE [LARGE SCALE GENOMIC DNA]</scope>
</reference>
<organism>
    <name type="scientific">Calycanthus floridus var. glaucus</name>
    <name type="common">Eastern sweetshrub</name>
    <name type="synonym">Calycanthus fertilis var. ferax</name>
    <dbReference type="NCBI Taxonomy" id="212734"/>
    <lineage>
        <taxon>Eukaryota</taxon>
        <taxon>Viridiplantae</taxon>
        <taxon>Streptophyta</taxon>
        <taxon>Embryophyta</taxon>
        <taxon>Tracheophyta</taxon>
        <taxon>Spermatophyta</taxon>
        <taxon>Magnoliopsida</taxon>
        <taxon>Magnoliidae</taxon>
        <taxon>Laurales</taxon>
        <taxon>Calycanthaceae</taxon>
        <taxon>Calycanthus</taxon>
    </lineage>
</organism>